<accession>P0A9K8</accession>
<accession>P07656</accession>
<organism>
    <name type="scientific">Shigella flexneri</name>
    <dbReference type="NCBI Taxonomy" id="623"/>
    <lineage>
        <taxon>Bacteria</taxon>
        <taxon>Pseudomonadati</taxon>
        <taxon>Pseudomonadota</taxon>
        <taxon>Gammaproteobacteria</taxon>
        <taxon>Enterobacterales</taxon>
        <taxon>Enterobacteriaceae</taxon>
        <taxon>Shigella</taxon>
    </lineage>
</organism>
<sequence length="241" mass="27417">MDSLNLNKHISGQFNAELESIRTQVMTMGGMVEQQLSDAITAMHNQDSDLAKRVIEGDKNVNMMEVAIDEACVRIIAKRQPTASDLRLVMVISKTIAELERIGDVADKICRTALEKFSQQHQPLLVSLESLGRHTIQMLHDVLDAFARMDIDEAVRIYREDKKVDQEYEGIVRQLMTYMMEDSRTIPSVLTALFCARSIERIGDRCQNICEFIFYYVKGQDFRHVGGDELDKLLAGKDSDK</sequence>
<keyword id="KW-0963">Cytoplasm</keyword>
<keyword id="KW-0592">Phosphate transport</keyword>
<keyword id="KW-1185">Reference proteome</keyword>
<keyword id="KW-0813">Transport</keyword>
<proteinExistence type="inferred from homology"/>
<evidence type="ECO:0000250" key="1"/>
<evidence type="ECO:0000305" key="2"/>
<comment type="function">
    <text evidence="1">Part of the phosphate (Pho) regulon, which plays a key role in phosphate homeostasis. Encoded together with proteins of the phosphate-specific transport (Pst) system in the polycistronic pstSCAB-phoU operon. PhoU is essential for the repression of the Pho regulon at high phosphate conditions. In this role, it may bind, possibly as a chaperone, to PhoR, PhoB or a PhoR-PhoB complex to promote dephosphorylation of phospho-PhoB, or inhibit formation of the PhoR-PhoB transitory complex (By similarity).</text>
</comment>
<comment type="subunit">
    <text evidence="1">Homodimer.</text>
</comment>
<comment type="subcellular location">
    <subcellularLocation>
        <location evidence="1">Cytoplasm</location>
    </subcellularLocation>
</comment>
<comment type="similarity">
    <text evidence="2">Belongs to the PhoU family.</text>
</comment>
<gene>
    <name type="primary">phoU</name>
    <name type="ordered locus">SF3731</name>
    <name type="ordered locus">S4041</name>
</gene>
<name>PHOU_SHIFL</name>
<dbReference type="EMBL" id="AE005674">
    <property type="protein sequence ID" value="AAN45177.2"/>
    <property type="molecule type" value="Genomic_DNA"/>
</dbReference>
<dbReference type="EMBL" id="AE014073">
    <property type="protein sequence ID" value="AAP19021.1"/>
    <property type="molecule type" value="Genomic_DNA"/>
</dbReference>
<dbReference type="RefSeq" id="NP_709470.2">
    <property type="nucleotide sequence ID" value="NC_004337.2"/>
</dbReference>
<dbReference type="RefSeq" id="WP_000377786.1">
    <property type="nucleotide sequence ID" value="NZ_WPGW01000131.1"/>
</dbReference>
<dbReference type="SMR" id="P0A9K8"/>
<dbReference type="STRING" id="198214.SF3731"/>
<dbReference type="PaxDb" id="198214-SF3731"/>
<dbReference type="GeneID" id="1026175"/>
<dbReference type="GeneID" id="93778211"/>
<dbReference type="KEGG" id="sfl:SF3731"/>
<dbReference type="KEGG" id="sfx:S4041"/>
<dbReference type="PATRIC" id="fig|198214.7.peg.4404"/>
<dbReference type="HOGENOM" id="CLU_078518_2_1_6"/>
<dbReference type="Proteomes" id="UP000001006">
    <property type="component" value="Chromosome"/>
</dbReference>
<dbReference type="Proteomes" id="UP000002673">
    <property type="component" value="Chromosome"/>
</dbReference>
<dbReference type="GO" id="GO:0005737">
    <property type="term" value="C:cytoplasm"/>
    <property type="evidence" value="ECO:0000250"/>
    <property type="project" value="UniProtKB"/>
</dbReference>
<dbReference type="GO" id="GO:0042803">
    <property type="term" value="F:protein homodimerization activity"/>
    <property type="evidence" value="ECO:0000250"/>
    <property type="project" value="UniProtKB"/>
</dbReference>
<dbReference type="GO" id="GO:0030643">
    <property type="term" value="P:intracellular phosphate ion homeostasis"/>
    <property type="evidence" value="ECO:0007669"/>
    <property type="project" value="InterPro"/>
</dbReference>
<dbReference type="GO" id="GO:0010629">
    <property type="term" value="P:negative regulation of gene expression"/>
    <property type="evidence" value="ECO:0000250"/>
    <property type="project" value="UniProtKB"/>
</dbReference>
<dbReference type="GO" id="GO:0045936">
    <property type="term" value="P:negative regulation of phosphate metabolic process"/>
    <property type="evidence" value="ECO:0000250"/>
    <property type="project" value="UniProtKB"/>
</dbReference>
<dbReference type="GO" id="GO:2000186">
    <property type="term" value="P:negative regulation of phosphate transmembrane transport"/>
    <property type="evidence" value="ECO:0000250"/>
    <property type="project" value="UniProtKB"/>
</dbReference>
<dbReference type="GO" id="GO:0006817">
    <property type="term" value="P:phosphate ion transport"/>
    <property type="evidence" value="ECO:0007669"/>
    <property type="project" value="UniProtKB-KW"/>
</dbReference>
<dbReference type="FunFam" id="1.20.58.220:FF:000001">
    <property type="entry name" value="Phosphate-specific transport system accessory protein PhoU"/>
    <property type="match status" value="1"/>
</dbReference>
<dbReference type="FunFam" id="1.20.58.220:FF:000002">
    <property type="entry name" value="Phosphate-specific transport system accessory protein PhoU"/>
    <property type="match status" value="1"/>
</dbReference>
<dbReference type="Gene3D" id="1.20.58.220">
    <property type="entry name" value="Phosphate transport system protein phou homolog 2, domain 2"/>
    <property type="match status" value="2"/>
</dbReference>
<dbReference type="InterPro" id="IPR028366">
    <property type="entry name" value="P_transport_PhoU"/>
</dbReference>
<dbReference type="InterPro" id="IPR038078">
    <property type="entry name" value="PhoU-like_sf"/>
</dbReference>
<dbReference type="InterPro" id="IPR026022">
    <property type="entry name" value="PhoU_dom"/>
</dbReference>
<dbReference type="NCBIfam" id="TIGR02135">
    <property type="entry name" value="phoU_full"/>
    <property type="match status" value="1"/>
</dbReference>
<dbReference type="NCBIfam" id="NF008332">
    <property type="entry name" value="PRK11115.1"/>
    <property type="match status" value="1"/>
</dbReference>
<dbReference type="PANTHER" id="PTHR42930">
    <property type="entry name" value="PHOSPHATE-SPECIFIC TRANSPORT SYSTEM ACCESSORY PROTEIN PHOU"/>
    <property type="match status" value="1"/>
</dbReference>
<dbReference type="PANTHER" id="PTHR42930:SF3">
    <property type="entry name" value="PHOSPHATE-SPECIFIC TRANSPORT SYSTEM ACCESSORY PROTEIN PHOU"/>
    <property type="match status" value="1"/>
</dbReference>
<dbReference type="Pfam" id="PF01895">
    <property type="entry name" value="PhoU"/>
    <property type="match status" value="2"/>
</dbReference>
<dbReference type="PIRSF" id="PIRSF003107">
    <property type="entry name" value="PhoU"/>
    <property type="match status" value="1"/>
</dbReference>
<dbReference type="SUPFAM" id="SSF109755">
    <property type="entry name" value="PhoU-like"/>
    <property type="match status" value="1"/>
</dbReference>
<protein>
    <recommendedName>
        <fullName>Phosphate-specific transport system accessory protein PhoU</fullName>
        <shortName>Pst system accessory protein PhoU</shortName>
    </recommendedName>
</protein>
<feature type="chain" id="PRO_0000155178" description="Phosphate-specific transport system accessory protein PhoU">
    <location>
        <begin position="1"/>
        <end position="241"/>
    </location>
</feature>
<reference key="1">
    <citation type="journal article" date="2002" name="Nucleic Acids Res.">
        <title>Genome sequence of Shigella flexneri 2a: insights into pathogenicity through comparison with genomes of Escherichia coli K12 and O157.</title>
        <authorList>
            <person name="Jin Q."/>
            <person name="Yuan Z."/>
            <person name="Xu J."/>
            <person name="Wang Y."/>
            <person name="Shen Y."/>
            <person name="Lu W."/>
            <person name="Wang J."/>
            <person name="Liu H."/>
            <person name="Yang J."/>
            <person name="Yang F."/>
            <person name="Zhang X."/>
            <person name="Zhang J."/>
            <person name="Yang G."/>
            <person name="Wu H."/>
            <person name="Qu D."/>
            <person name="Dong J."/>
            <person name="Sun L."/>
            <person name="Xue Y."/>
            <person name="Zhao A."/>
            <person name="Gao Y."/>
            <person name="Zhu J."/>
            <person name="Kan B."/>
            <person name="Ding K."/>
            <person name="Chen S."/>
            <person name="Cheng H."/>
            <person name="Yao Z."/>
            <person name="He B."/>
            <person name="Chen R."/>
            <person name="Ma D."/>
            <person name="Qiang B."/>
            <person name="Wen Y."/>
            <person name="Hou Y."/>
            <person name="Yu J."/>
        </authorList>
    </citation>
    <scope>NUCLEOTIDE SEQUENCE [LARGE SCALE GENOMIC DNA]</scope>
    <source>
        <strain>301 / Serotype 2a</strain>
    </source>
</reference>
<reference key="2">
    <citation type="journal article" date="2003" name="Infect. Immun.">
        <title>Complete genome sequence and comparative genomics of Shigella flexneri serotype 2a strain 2457T.</title>
        <authorList>
            <person name="Wei J."/>
            <person name="Goldberg M.B."/>
            <person name="Burland V."/>
            <person name="Venkatesan M.M."/>
            <person name="Deng W."/>
            <person name="Fournier G."/>
            <person name="Mayhew G.F."/>
            <person name="Plunkett G. III"/>
            <person name="Rose D.J."/>
            <person name="Darling A."/>
            <person name="Mau B."/>
            <person name="Perna N.T."/>
            <person name="Payne S.M."/>
            <person name="Runyen-Janecky L.J."/>
            <person name="Zhou S."/>
            <person name="Schwartz D.C."/>
            <person name="Blattner F.R."/>
        </authorList>
    </citation>
    <scope>NUCLEOTIDE SEQUENCE [LARGE SCALE GENOMIC DNA]</scope>
    <source>
        <strain>ATCC 700930 / 2457T / Serotype 2a</strain>
    </source>
</reference>